<reference key="1">
    <citation type="journal article" date="1998" name="Infect. Immun.">
        <title>Translocated intimin receptors (Tir) of Shiga-toxigenic Escherichia coli isolates belonging to serogroups O26, O111, and O157 react with sera from patients with hemolytic-uremic syndrome and exhibit marked sequence heterogeneity.</title>
        <authorList>
            <person name="Paton A.W."/>
            <person name="Manning P.A."/>
            <person name="Woodrow M.C."/>
            <person name="Paton J.C."/>
        </authorList>
    </citation>
    <scope>NUCLEOTIDE SEQUENCE [GENOMIC DNA]</scope>
    <source>
        <strain>O26:H- / 95ZG1 / EHEC</strain>
    </source>
</reference>
<reference key="2">
    <citation type="journal article" date="1998" name="Mol. Microbiol.">
        <title>EspE, a novel secreted protein of attaching and effacing bacteria, is directly translocated into infected host cells, where it appears as a tyrosine-phosphorylated 90 kDa protein.</title>
        <authorList>
            <person name="Deibel C."/>
            <person name="Kramer S."/>
            <person name="Chakraborty T."/>
            <person name="Ebel F."/>
        </authorList>
    </citation>
    <scope>NUCLEOTIDE SEQUENCE [GENOMIC DNA]</scope>
    <scope>PROTEIN SEQUENCE OF 2-19</scope>
    <scope>SUBCELLULAR LOCATION</scope>
    <scope>PHOSPHORYLATION</scope>
    <source>
        <strain>O26:H- / 413/89-1 / EHEC</strain>
    </source>
</reference>
<reference key="3">
    <citation type="submission" date="2000-04" db="EMBL/GenBank/DDBJ databases">
        <title>Genetic organisation and sequence of the LEE II locus in Shiga toxin-producing Escherichia coli.</title>
        <authorList>
            <person name="Benkel P."/>
            <person name="Chakraborty T."/>
        </authorList>
    </citation>
    <scope>NUCLEOTIDE SEQUENCE [GENOMIC DNA]</scope>
    <source>
        <strain>O26:H- / 413/89-1 / EHEC</strain>
    </source>
</reference>
<organism>
    <name type="scientific">Escherichia coli</name>
    <dbReference type="NCBI Taxonomy" id="562"/>
    <lineage>
        <taxon>Bacteria</taxon>
        <taxon>Pseudomonadati</taxon>
        <taxon>Pseudomonadota</taxon>
        <taxon>Gammaproteobacteria</taxon>
        <taxon>Enterobacterales</taxon>
        <taxon>Enterobacteriaceae</taxon>
        <taxon>Escherichia</taxon>
    </lineage>
</organism>
<feature type="chain" id="PRO_0000414052" description="Translocated intimin receptor Tir">
    <location>
        <begin position="1"/>
        <end position="538"/>
    </location>
</feature>
<feature type="topological domain" description="Cytoplasmic" evidence="2">
    <location>
        <begin position="1"/>
        <end position="222"/>
    </location>
</feature>
<feature type="transmembrane region" description="Helical" evidence="2">
    <location>
        <begin position="223"/>
        <end position="243"/>
    </location>
</feature>
<feature type="topological domain" description="Extracellular" evidence="2">
    <location>
        <begin position="244"/>
        <end position="354"/>
    </location>
</feature>
<feature type="transmembrane region" description="Helical" evidence="2">
    <location>
        <begin position="355"/>
        <end position="375"/>
    </location>
</feature>
<feature type="topological domain" description="Cytoplasmic" evidence="2">
    <location>
        <begin position="376"/>
        <end position="538"/>
    </location>
</feature>
<feature type="region of interest" description="Disordered" evidence="3">
    <location>
        <begin position="1"/>
        <end position="37"/>
    </location>
</feature>
<feature type="region of interest" description="Disordered" evidence="3">
    <location>
        <begin position="184"/>
        <end position="204"/>
    </location>
</feature>
<feature type="region of interest" description="Disordered" evidence="3">
    <location>
        <begin position="279"/>
        <end position="299"/>
    </location>
</feature>
<feature type="region of interest" description="Disordered" evidence="3">
    <location>
        <begin position="313"/>
        <end position="347"/>
    </location>
</feature>
<feature type="region of interest" description="Disordered" evidence="3">
    <location>
        <begin position="380"/>
        <end position="449"/>
    </location>
</feature>
<feature type="short sequence motif" description="Essential for actin pedestal formation" evidence="1">
    <location>
        <begin position="440"/>
        <end position="442"/>
    </location>
</feature>
<feature type="compositionally biased region" description="Basic and acidic residues" evidence="3">
    <location>
        <begin position="184"/>
        <end position="196"/>
    </location>
</feature>
<feature type="compositionally biased region" description="Basic and acidic residues" evidence="3">
    <location>
        <begin position="335"/>
        <end position="346"/>
    </location>
</feature>
<feature type="compositionally biased region" description="Polar residues" evidence="3">
    <location>
        <begin position="381"/>
        <end position="411"/>
    </location>
</feature>
<feature type="compositionally biased region" description="Low complexity" evidence="3">
    <location>
        <begin position="417"/>
        <end position="430"/>
    </location>
</feature>
<name>TIR1_ECOLX</name>
<evidence type="ECO:0000250" key="1"/>
<evidence type="ECO:0000255" key="2"/>
<evidence type="ECO:0000256" key="3">
    <source>
        <dbReference type="SAM" id="MobiDB-lite"/>
    </source>
</evidence>
<evidence type="ECO:0000269" key="4">
    <source>
    </source>
</evidence>
<evidence type="ECO:0000305" key="5"/>
<gene>
    <name type="primary">tir</name>
    <name type="synonym">espE</name>
</gene>
<dbReference type="EMBL" id="AF070068">
    <property type="protein sequence ID" value="AAC69316.1"/>
    <property type="molecule type" value="Genomic_DNA"/>
</dbReference>
<dbReference type="EMBL" id="AJ223063">
    <property type="protein sequence ID" value="CAA11065.1"/>
    <property type="molecule type" value="Genomic_DNA"/>
</dbReference>
<dbReference type="EMBL" id="AJ277443">
    <property type="protein sequence ID" value="CAC81869.1"/>
    <property type="molecule type" value="Genomic_DNA"/>
</dbReference>
<dbReference type="RefSeq" id="WP_001121330.1">
    <property type="nucleotide sequence ID" value="NZ_WJGB01000091.1"/>
</dbReference>
<dbReference type="SMR" id="P0DJ90"/>
<dbReference type="GO" id="GO:0005576">
    <property type="term" value="C:extracellular region"/>
    <property type="evidence" value="ECO:0007669"/>
    <property type="project" value="UniProtKB-SubCell"/>
</dbReference>
<dbReference type="GO" id="GO:0020002">
    <property type="term" value="C:host cell plasma membrane"/>
    <property type="evidence" value="ECO:0007669"/>
    <property type="project" value="UniProtKB-SubCell"/>
</dbReference>
<dbReference type="GO" id="GO:0016020">
    <property type="term" value="C:membrane"/>
    <property type="evidence" value="ECO:0007669"/>
    <property type="project" value="UniProtKB-KW"/>
</dbReference>
<dbReference type="Gene3D" id="4.10.820.10">
    <property type="entry name" value="Translocated intimin receptor, central domain"/>
    <property type="match status" value="1"/>
</dbReference>
<dbReference type="InterPro" id="IPR037003">
    <property type="entry name" value="Tir_central_sf"/>
</dbReference>
<dbReference type="InterPro" id="IPR022638">
    <property type="entry name" value="Transloc_intimin_rcpt"/>
</dbReference>
<dbReference type="InterPro" id="IPR022639">
    <property type="entry name" value="Transloc_intimin_rcpt_C"/>
</dbReference>
<dbReference type="InterPro" id="IPR003536">
    <property type="entry name" value="Transloc_intimin_rcpt_cen_dom"/>
</dbReference>
<dbReference type="InterPro" id="IPR022633">
    <property type="entry name" value="Transloc_intimin_rcpt_N"/>
</dbReference>
<dbReference type="NCBIfam" id="NF033637">
    <property type="entry name" value="transloc_TIR"/>
    <property type="match status" value="1"/>
</dbReference>
<dbReference type="Pfam" id="PF07489">
    <property type="entry name" value="Tir_receptor_C"/>
    <property type="match status" value="1"/>
</dbReference>
<dbReference type="Pfam" id="PF03549">
    <property type="entry name" value="Tir_receptor_M"/>
    <property type="match status" value="1"/>
</dbReference>
<dbReference type="Pfam" id="PF07490">
    <property type="entry name" value="Tir_receptor_N"/>
    <property type="match status" value="1"/>
</dbReference>
<dbReference type="PRINTS" id="PR01370">
    <property type="entry name" value="TRNSINTIMINR"/>
</dbReference>
<comment type="function">
    <text evidence="1">Multifunctional protein that is required for efficient pedestal formation in host epithelial cells during infection. The extracellular region acts as a receptor for bacterial intimin, allowing the bacterium to attach tightly to the host-cell surface. Simultaneously, the intracellular region initiates a signaling cascade in the host cell, which leads to actin polymerization and formation of actin pedestals at the sites of bacterial adhesion (By similarity).</text>
</comment>
<comment type="subunit">
    <text evidence="1">Interacts with intimin and host proteins.</text>
</comment>
<comment type="subcellular location">
    <subcellularLocation>
        <location evidence="4">Secreted</location>
    </subcellularLocation>
    <subcellularLocation>
        <location evidence="4">Host cell membrane</location>
        <topology evidence="4">Multi-pass membrane protein</topology>
    </subcellularLocation>
    <text>Secreted via the type III secretion system (T3SS). Released into the host cytoplasm via T3SS and then independently inserts into the plasma membrane from a cytoplasmic location. In host cells, localizes to the tip of the actin pedestal.</text>
</comment>
<comment type="PTM">
    <text evidence="4">Phosphorylated by host kinases.</text>
</comment>
<comment type="similarity">
    <text evidence="5">Belongs to the Tir receptor family.</text>
</comment>
<keyword id="KW-0903">Direct protein sequencing</keyword>
<keyword id="KW-1032">Host cell membrane</keyword>
<keyword id="KW-1043">Host membrane</keyword>
<keyword id="KW-0472">Membrane</keyword>
<keyword id="KW-0597">Phosphoprotein</keyword>
<keyword id="KW-0675">Receptor</keyword>
<keyword id="KW-0964">Secreted</keyword>
<keyword id="KW-0812">Transmembrane</keyword>
<keyword id="KW-1133">Transmembrane helix</keyword>
<keyword id="KW-0843">Virulence</keyword>
<accession>P0DJ90</accession>
<accession>Q47014</accession>
<proteinExistence type="evidence at protein level"/>
<sequence length="538" mass="55421">MPIGNLGHNPNVRALIPPAPPLPSQTDGAGGARNQLINSNGPMGSRLLFTPIRNSVADAADSRASDIPGLPTNPLRFAASEVSLHGALEVLHDKGGLDTLNSAIGSSLFRVETRDDGSHVAIGQKNGLETTVVLSEQEFSSLQSLDPEGKNKFVFTGGRGGAGHAMVTVASDIAEARQRIIDKLEPKDTKETKEPGDPNSGEGKIIEIHTSTSTSSLRADPKLWLSLGTIAAGLIGMAATGIAQAVALTPEPDDPITTDPDAAANTAEAAAKDQLTKEAFQNPDNQKVNIDENGNAIPSGELKDDVVAQIAEQAKAAGEQARQEAIESNSQAQQKYDEQHAKREQEMSLSSGVGYGISGALILGGGIGAGVTAALHRKNQPAEQTITTRTVVDNQPTNNASAQGNTDTSGPEESPASRRNSNASLASNGSDTSSTGTVENPYADVGMPRNDSLARISEEPIYDEVAADPNYSVIQHFSGNSPVTGRLVGTPGQGIQSTYALLASSGGLRLGMGGLTGGGESAVSTANAAPTPGPARFV</sequence>
<protein>
    <recommendedName>
        <fullName>Translocated intimin receptor Tir</fullName>
    </recommendedName>
    <alternativeName>
        <fullName>Secreted effector protein Tir</fullName>
    </alternativeName>
</protein>